<comment type="function">
    <text evidence="1">Catalyzes the acyloin condensation reaction between C atoms 2 and 3 of pyruvate and glyceraldehyde 3-phosphate to yield 1-deoxy-D-xylulose-5-phosphate (DXP).</text>
</comment>
<comment type="catalytic activity">
    <reaction evidence="1">
        <text>D-glyceraldehyde 3-phosphate + pyruvate + H(+) = 1-deoxy-D-xylulose 5-phosphate + CO2</text>
        <dbReference type="Rhea" id="RHEA:12605"/>
        <dbReference type="ChEBI" id="CHEBI:15361"/>
        <dbReference type="ChEBI" id="CHEBI:15378"/>
        <dbReference type="ChEBI" id="CHEBI:16526"/>
        <dbReference type="ChEBI" id="CHEBI:57792"/>
        <dbReference type="ChEBI" id="CHEBI:59776"/>
        <dbReference type="EC" id="2.2.1.7"/>
    </reaction>
</comment>
<comment type="cofactor">
    <cofactor evidence="1">
        <name>Mg(2+)</name>
        <dbReference type="ChEBI" id="CHEBI:18420"/>
    </cofactor>
    <text evidence="1">Binds 1 Mg(2+) ion per subunit.</text>
</comment>
<comment type="cofactor">
    <cofactor evidence="1">
        <name>thiamine diphosphate</name>
        <dbReference type="ChEBI" id="CHEBI:58937"/>
    </cofactor>
    <text evidence="1">Binds 1 thiamine pyrophosphate per subunit.</text>
</comment>
<comment type="pathway">
    <text evidence="1">Metabolic intermediate biosynthesis; 1-deoxy-D-xylulose 5-phosphate biosynthesis; 1-deoxy-D-xylulose 5-phosphate from D-glyceraldehyde 3-phosphate and pyruvate: step 1/1.</text>
</comment>
<comment type="subunit">
    <text evidence="1">Homodimer.</text>
</comment>
<comment type="similarity">
    <text evidence="1">Belongs to the transketolase family. DXPS subfamily.</text>
</comment>
<accession>Q82KW8</accession>
<evidence type="ECO:0000255" key="1">
    <source>
        <dbReference type="HAMAP-Rule" id="MF_00315"/>
    </source>
</evidence>
<keyword id="KW-0414">Isoprene biosynthesis</keyword>
<keyword id="KW-0460">Magnesium</keyword>
<keyword id="KW-0479">Metal-binding</keyword>
<keyword id="KW-1185">Reference proteome</keyword>
<keyword id="KW-0784">Thiamine biosynthesis</keyword>
<keyword id="KW-0786">Thiamine pyrophosphate</keyword>
<keyword id="KW-0808">Transferase</keyword>
<organism>
    <name type="scientific">Streptomyces avermitilis (strain ATCC 31267 / DSM 46492 / JCM 5070 / NBRC 14893 / NCIMB 12804 / NRRL 8165 / MA-4680)</name>
    <dbReference type="NCBI Taxonomy" id="227882"/>
    <lineage>
        <taxon>Bacteria</taxon>
        <taxon>Bacillati</taxon>
        <taxon>Actinomycetota</taxon>
        <taxon>Actinomycetes</taxon>
        <taxon>Kitasatosporales</taxon>
        <taxon>Streptomycetaceae</taxon>
        <taxon>Streptomyces</taxon>
    </lineage>
</organism>
<gene>
    <name evidence="1" type="primary">dxs2</name>
    <name type="ordered locus">SAV_2244</name>
</gene>
<proteinExistence type="inferred from homology"/>
<name>DXS2_STRAW</name>
<feature type="chain" id="PRO_0000189155" description="1-deoxy-D-xylulose-5-phosphate synthase 2">
    <location>
        <begin position="1"/>
        <end position="642"/>
    </location>
</feature>
<feature type="binding site" evidence="1">
    <location>
        <position position="73"/>
    </location>
    <ligand>
        <name>thiamine diphosphate</name>
        <dbReference type="ChEBI" id="CHEBI:58937"/>
    </ligand>
</feature>
<feature type="binding site" evidence="1">
    <location>
        <begin position="113"/>
        <end position="115"/>
    </location>
    <ligand>
        <name>thiamine diphosphate</name>
        <dbReference type="ChEBI" id="CHEBI:58937"/>
    </ligand>
</feature>
<feature type="binding site" evidence="1">
    <location>
        <position position="144"/>
    </location>
    <ligand>
        <name>Mg(2+)</name>
        <dbReference type="ChEBI" id="CHEBI:18420"/>
    </ligand>
</feature>
<feature type="binding site" evidence="1">
    <location>
        <begin position="145"/>
        <end position="146"/>
    </location>
    <ligand>
        <name>thiamine diphosphate</name>
        <dbReference type="ChEBI" id="CHEBI:58937"/>
    </ligand>
</feature>
<feature type="binding site" evidence="1">
    <location>
        <position position="174"/>
    </location>
    <ligand>
        <name>Mg(2+)</name>
        <dbReference type="ChEBI" id="CHEBI:18420"/>
    </ligand>
</feature>
<feature type="binding site" evidence="1">
    <location>
        <position position="174"/>
    </location>
    <ligand>
        <name>thiamine diphosphate</name>
        <dbReference type="ChEBI" id="CHEBI:58937"/>
    </ligand>
</feature>
<feature type="binding site" evidence="1">
    <location>
        <position position="285"/>
    </location>
    <ligand>
        <name>thiamine diphosphate</name>
        <dbReference type="ChEBI" id="CHEBI:58937"/>
    </ligand>
</feature>
<feature type="binding site" evidence="1">
    <location>
        <position position="366"/>
    </location>
    <ligand>
        <name>thiamine diphosphate</name>
        <dbReference type="ChEBI" id="CHEBI:58937"/>
    </ligand>
</feature>
<reference key="1">
    <citation type="journal article" date="2001" name="Proc. Natl. Acad. Sci. U.S.A.">
        <title>Genome sequence of an industrial microorganism Streptomyces avermitilis: deducing the ability of producing secondary metabolites.</title>
        <authorList>
            <person name="Omura S."/>
            <person name="Ikeda H."/>
            <person name="Ishikawa J."/>
            <person name="Hanamoto A."/>
            <person name="Takahashi C."/>
            <person name="Shinose M."/>
            <person name="Takahashi Y."/>
            <person name="Horikawa H."/>
            <person name="Nakazawa H."/>
            <person name="Osonoe T."/>
            <person name="Kikuchi H."/>
            <person name="Shiba T."/>
            <person name="Sakaki Y."/>
            <person name="Hattori M."/>
        </authorList>
    </citation>
    <scope>NUCLEOTIDE SEQUENCE [LARGE SCALE GENOMIC DNA]</scope>
    <source>
        <strain>ATCC 31267 / DSM 46492 / JCM 5070 / NBRC 14893 / NCIMB 12804 / NRRL 8165 / MA-4680</strain>
    </source>
</reference>
<reference key="2">
    <citation type="journal article" date="2003" name="Nat. Biotechnol.">
        <title>Complete genome sequence and comparative analysis of the industrial microorganism Streptomyces avermitilis.</title>
        <authorList>
            <person name="Ikeda H."/>
            <person name="Ishikawa J."/>
            <person name="Hanamoto A."/>
            <person name="Shinose M."/>
            <person name="Kikuchi H."/>
            <person name="Shiba T."/>
            <person name="Sakaki Y."/>
            <person name="Hattori M."/>
            <person name="Omura S."/>
        </authorList>
    </citation>
    <scope>NUCLEOTIDE SEQUENCE [LARGE SCALE GENOMIC DNA]</scope>
    <source>
        <strain>ATCC 31267 / DSM 46492 / JCM 5070 / NBRC 14893 / NCIMB 12804 / NRRL 8165 / MA-4680</strain>
    </source>
</reference>
<dbReference type="EC" id="2.2.1.7" evidence="1"/>
<dbReference type="EMBL" id="BA000030">
    <property type="protein sequence ID" value="BAC69955.1"/>
    <property type="molecule type" value="Genomic_DNA"/>
</dbReference>
<dbReference type="SMR" id="Q82KW8"/>
<dbReference type="GeneID" id="41539339"/>
<dbReference type="KEGG" id="sma:SAVERM_2244"/>
<dbReference type="eggNOG" id="COG1154">
    <property type="taxonomic scope" value="Bacteria"/>
</dbReference>
<dbReference type="HOGENOM" id="CLU_009227_1_4_11"/>
<dbReference type="OrthoDB" id="9803371at2"/>
<dbReference type="UniPathway" id="UPA00064">
    <property type="reaction ID" value="UER00091"/>
</dbReference>
<dbReference type="Proteomes" id="UP000000428">
    <property type="component" value="Chromosome"/>
</dbReference>
<dbReference type="GO" id="GO:0005829">
    <property type="term" value="C:cytosol"/>
    <property type="evidence" value="ECO:0007669"/>
    <property type="project" value="TreeGrafter"/>
</dbReference>
<dbReference type="GO" id="GO:0008661">
    <property type="term" value="F:1-deoxy-D-xylulose-5-phosphate synthase activity"/>
    <property type="evidence" value="ECO:0007669"/>
    <property type="project" value="UniProtKB-UniRule"/>
</dbReference>
<dbReference type="GO" id="GO:0000287">
    <property type="term" value="F:magnesium ion binding"/>
    <property type="evidence" value="ECO:0007669"/>
    <property type="project" value="UniProtKB-UniRule"/>
</dbReference>
<dbReference type="GO" id="GO:0030976">
    <property type="term" value="F:thiamine pyrophosphate binding"/>
    <property type="evidence" value="ECO:0007669"/>
    <property type="project" value="UniProtKB-UniRule"/>
</dbReference>
<dbReference type="GO" id="GO:0052865">
    <property type="term" value="P:1-deoxy-D-xylulose 5-phosphate biosynthetic process"/>
    <property type="evidence" value="ECO:0007669"/>
    <property type="project" value="UniProtKB-UniPathway"/>
</dbReference>
<dbReference type="GO" id="GO:0019288">
    <property type="term" value="P:isopentenyl diphosphate biosynthetic process, methylerythritol 4-phosphate pathway"/>
    <property type="evidence" value="ECO:0007669"/>
    <property type="project" value="TreeGrafter"/>
</dbReference>
<dbReference type="GO" id="GO:0016114">
    <property type="term" value="P:terpenoid biosynthetic process"/>
    <property type="evidence" value="ECO:0007669"/>
    <property type="project" value="UniProtKB-UniRule"/>
</dbReference>
<dbReference type="GO" id="GO:0009228">
    <property type="term" value="P:thiamine biosynthetic process"/>
    <property type="evidence" value="ECO:0007669"/>
    <property type="project" value="UniProtKB-UniRule"/>
</dbReference>
<dbReference type="CDD" id="cd02007">
    <property type="entry name" value="TPP_DXS"/>
    <property type="match status" value="1"/>
</dbReference>
<dbReference type="CDD" id="cd07033">
    <property type="entry name" value="TPP_PYR_DXS_TK_like"/>
    <property type="match status" value="1"/>
</dbReference>
<dbReference type="FunFam" id="3.40.50.920:FF:000002">
    <property type="entry name" value="1-deoxy-D-xylulose-5-phosphate synthase"/>
    <property type="match status" value="1"/>
</dbReference>
<dbReference type="FunFam" id="3.40.50.970:FF:000005">
    <property type="entry name" value="1-deoxy-D-xylulose-5-phosphate synthase"/>
    <property type="match status" value="1"/>
</dbReference>
<dbReference type="Gene3D" id="3.40.50.920">
    <property type="match status" value="1"/>
</dbReference>
<dbReference type="Gene3D" id="3.40.50.970">
    <property type="match status" value="2"/>
</dbReference>
<dbReference type="HAMAP" id="MF_00315">
    <property type="entry name" value="DXP_synth"/>
    <property type="match status" value="1"/>
</dbReference>
<dbReference type="InterPro" id="IPR005477">
    <property type="entry name" value="Dxylulose-5-P_synthase"/>
</dbReference>
<dbReference type="InterPro" id="IPR029061">
    <property type="entry name" value="THDP-binding"/>
</dbReference>
<dbReference type="InterPro" id="IPR009014">
    <property type="entry name" value="Transketo_C/PFOR_II"/>
</dbReference>
<dbReference type="InterPro" id="IPR005475">
    <property type="entry name" value="Transketolase-like_Pyr-bd"/>
</dbReference>
<dbReference type="InterPro" id="IPR020826">
    <property type="entry name" value="Transketolase_BS"/>
</dbReference>
<dbReference type="InterPro" id="IPR033248">
    <property type="entry name" value="Transketolase_C"/>
</dbReference>
<dbReference type="InterPro" id="IPR049557">
    <property type="entry name" value="Transketolase_CS"/>
</dbReference>
<dbReference type="NCBIfam" id="TIGR00204">
    <property type="entry name" value="dxs"/>
    <property type="match status" value="1"/>
</dbReference>
<dbReference type="NCBIfam" id="NF003933">
    <property type="entry name" value="PRK05444.2-2"/>
    <property type="match status" value="1"/>
</dbReference>
<dbReference type="PANTHER" id="PTHR43322">
    <property type="entry name" value="1-D-DEOXYXYLULOSE 5-PHOSPHATE SYNTHASE-RELATED"/>
    <property type="match status" value="1"/>
</dbReference>
<dbReference type="PANTHER" id="PTHR43322:SF5">
    <property type="entry name" value="1-DEOXY-D-XYLULOSE-5-PHOSPHATE SYNTHASE, CHLOROPLASTIC"/>
    <property type="match status" value="1"/>
</dbReference>
<dbReference type="Pfam" id="PF13292">
    <property type="entry name" value="DXP_synthase_N"/>
    <property type="match status" value="1"/>
</dbReference>
<dbReference type="Pfam" id="PF02779">
    <property type="entry name" value="Transket_pyr"/>
    <property type="match status" value="1"/>
</dbReference>
<dbReference type="Pfam" id="PF02780">
    <property type="entry name" value="Transketolase_C"/>
    <property type="match status" value="1"/>
</dbReference>
<dbReference type="SMART" id="SM00861">
    <property type="entry name" value="Transket_pyr"/>
    <property type="match status" value="1"/>
</dbReference>
<dbReference type="SUPFAM" id="SSF52518">
    <property type="entry name" value="Thiamin diphosphate-binding fold (THDP-binding)"/>
    <property type="match status" value="2"/>
</dbReference>
<dbReference type="SUPFAM" id="SSF52922">
    <property type="entry name" value="TK C-terminal domain-like"/>
    <property type="match status" value="1"/>
</dbReference>
<dbReference type="PROSITE" id="PS00801">
    <property type="entry name" value="TRANSKETOLASE_1"/>
    <property type="match status" value="1"/>
</dbReference>
<dbReference type="PROSITE" id="PS00802">
    <property type="entry name" value="TRANSKETOLASE_2"/>
    <property type="match status" value="1"/>
</dbReference>
<sequence length="642" mass="68726">MPLLTRIRGPRDLDRLSLEQLDQLAEEIRTFLVDAVSKTGGHLGPNLGVVELTIALHRVFDSPKDRVLFDTGHQSYVHKLLTGRQDFSKLKMKGGLSGYPSQAESEHDVIENSHASTVLGWADGLAKANQVLERDDHVVAVIGDGALTGGMAWEALNNIAAAKDRPLVIVVNDNERSYAPTIGGLANHLATLRTTDGYERFLARGKDLLERTPVVGRPLYETLHGAKKGLKDFIAPQGMFEDLGLKYVGPIDGHDIEALESALARAKRFGGPVIVHCLTEKGRGYQPALQDEADRFHAVGKIHPDTGLPIASSGADWTSVFGEEMVKLGQERKDIVAITAAMLQPVGLDKFAKVFPKRVYDVGIAEQHAAVSAAGLATGGLHPVFAVYATFLNRAFDQVLMDVALHKCGVTFVLDRAGVTGTDGASHNGMWDMSILQVVPGLRLAAPRDADQVRAQLREAVDVDDAPTVVRFSKGAVGPAVPAVGRIGGMDVLREPGTDAPDVLLVSVGALAPMCLEIAGLLDKQGISATVVDPRWVKPVDEAMAPLAERHRVVVTVEDNSRVGGVGSAIAQALRDAGVDVPLRDFGIPPRFLDHASRGEVMAEIGLTAPDIARQVTGLVSKLDGRFERPTAEIDSVEPARD</sequence>
<protein>
    <recommendedName>
        <fullName evidence="1">1-deoxy-D-xylulose-5-phosphate synthase 2</fullName>
        <ecNumber evidence="1">2.2.1.7</ecNumber>
    </recommendedName>
    <alternativeName>
        <fullName evidence="1">1-deoxyxylulose-5-phosphate synthase 2</fullName>
        <shortName evidence="1">DXP synthase 2</shortName>
        <shortName evidence="1">DXPS 2</shortName>
    </alternativeName>
</protein>